<dbReference type="EC" id="2.5.1.39" evidence="1"/>
<dbReference type="EMBL" id="CP000089">
    <property type="protein sequence ID" value="AAZ45170.1"/>
    <property type="molecule type" value="Genomic_DNA"/>
</dbReference>
<dbReference type="SMR" id="Q47J11"/>
<dbReference type="STRING" id="159087.Daro_0413"/>
<dbReference type="KEGG" id="dar:Daro_0413"/>
<dbReference type="eggNOG" id="COG0382">
    <property type="taxonomic scope" value="Bacteria"/>
</dbReference>
<dbReference type="HOGENOM" id="CLU_034879_1_0_4"/>
<dbReference type="OrthoDB" id="9782418at2"/>
<dbReference type="UniPathway" id="UPA00232"/>
<dbReference type="GO" id="GO:0005886">
    <property type="term" value="C:plasma membrane"/>
    <property type="evidence" value="ECO:0007669"/>
    <property type="project" value="UniProtKB-SubCell"/>
</dbReference>
<dbReference type="GO" id="GO:0008412">
    <property type="term" value="F:4-hydroxybenzoate polyprenyltransferase activity"/>
    <property type="evidence" value="ECO:0007669"/>
    <property type="project" value="UniProtKB-UniRule"/>
</dbReference>
<dbReference type="GO" id="GO:0006744">
    <property type="term" value="P:ubiquinone biosynthetic process"/>
    <property type="evidence" value="ECO:0007669"/>
    <property type="project" value="UniProtKB-UniRule"/>
</dbReference>
<dbReference type="CDD" id="cd13959">
    <property type="entry name" value="PT_UbiA_COQ2"/>
    <property type="match status" value="1"/>
</dbReference>
<dbReference type="FunFam" id="1.10.357.140:FF:000002">
    <property type="entry name" value="4-hydroxybenzoate octaprenyltransferase"/>
    <property type="match status" value="1"/>
</dbReference>
<dbReference type="FunFam" id="1.20.120.1780:FF:000001">
    <property type="entry name" value="4-hydroxybenzoate octaprenyltransferase"/>
    <property type="match status" value="1"/>
</dbReference>
<dbReference type="Gene3D" id="1.10.357.140">
    <property type="entry name" value="UbiA prenyltransferase"/>
    <property type="match status" value="1"/>
</dbReference>
<dbReference type="Gene3D" id="1.20.120.1780">
    <property type="entry name" value="UbiA prenyltransferase"/>
    <property type="match status" value="1"/>
</dbReference>
<dbReference type="HAMAP" id="MF_01635">
    <property type="entry name" value="UbiA"/>
    <property type="match status" value="1"/>
</dbReference>
<dbReference type="InterPro" id="IPR006370">
    <property type="entry name" value="HB_polyprenyltransferase-like"/>
</dbReference>
<dbReference type="InterPro" id="IPR039653">
    <property type="entry name" value="Prenyltransferase"/>
</dbReference>
<dbReference type="InterPro" id="IPR000537">
    <property type="entry name" value="UbiA_prenyltransferase"/>
</dbReference>
<dbReference type="InterPro" id="IPR030470">
    <property type="entry name" value="UbiA_prenylTrfase_CS"/>
</dbReference>
<dbReference type="InterPro" id="IPR044878">
    <property type="entry name" value="UbiA_sf"/>
</dbReference>
<dbReference type="NCBIfam" id="TIGR01474">
    <property type="entry name" value="ubiA_proteo"/>
    <property type="match status" value="1"/>
</dbReference>
<dbReference type="PANTHER" id="PTHR11048:SF28">
    <property type="entry name" value="4-HYDROXYBENZOATE POLYPRENYLTRANSFERASE, MITOCHONDRIAL"/>
    <property type="match status" value="1"/>
</dbReference>
<dbReference type="PANTHER" id="PTHR11048">
    <property type="entry name" value="PRENYLTRANSFERASES"/>
    <property type="match status" value="1"/>
</dbReference>
<dbReference type="Pfam" id="PF01040">
    <property type="entry name" value="UbiA"/>
    <property type="match status" value="1"/>
</dbReference>
<dbReference type="PROSITE" id="PS00943">
    <property type="entry name" value="UBIA"/>
    <property type="match status" value="1"/>
</dbReference>
<sequence>MNWPALKERINLYEKLMRLDKPIGILLLLWPTLWALWLSALGRPNWIVVWIFILGTVLMRSAGCVINDYADRDFDKHVERTKERPLTAGKVTTKEALALFAGLSLLSFLLVVFLGNTLVIWLSLPAVFLAASYPFTKRFFAIPQAYLGVAFGFGIPMAYAAHLGEVPAEAWWLLLANVFWAVAYDTEYAMVDRDDDLKIGIKTSAITFGRFDVAAVMLCYGVTLAIIGGIGYSLNRGPAFYAGLAVATCIMGVHYTWIRGRERMPCFKAFLHNNWVGLSIFVGIVVDFLVSGRNLW</sequence>
<comment type="function">
    <text evidence="1">Catalyzes the prenylation of para-hydroxybenzoate (PHB) with an all-trans polyprenyl group. Mediates the second step in the final reaction sequence of ubiquinone-8 (UQ-8) biosynthesis, which is the condensation of the polyisoprenoid side chain with PHB, generating the first membrane-bound Q intermediate 3-octaprenyl-4-hydroxybenzoate.</text>
</comment>
<comment type="catalytic activity">
    <reaction evidence="1">
        <text>all-trans-octaprenyl diphosphate + 4-hydroxybenzoate = 4-hydroxy-3-(all-trans-octaprenyl)benzoate + diphosphate</text>
        <dbReference type="Rhea" id="RHEA:27782"/>
        <dbReference type="ChEBI" id="CHEBI:1617"/>
        <dbReference type="ChEBI" id="CHEBI:17879"/>
        <dbReference type="ChEBI" id="CHEBI:33019"/>
        <dbReference type="ChEBI" id="CHEBI:57711"/>
        <dbReference type="EC" id="2.5.1.39"/>
    </reaction>
</comment>
<comment type="cofactor">
    <cofactor evidence="1">
        <name>Mg(2+)</name>
        <dbReference type="ChEBI" id="CHEBI:18420"/>
    </cofactor>
</comment>
<comment type="pathway">
    <text evidence="1">Cofactor biosynthesis; ubiquinone biosynthesis.</text>
</comment>
<comment type="subcellular location">
    <subcellularLocation>
        <location evidence="1">Cell inner membrane</location>
        <topology evidence="1">Multi-pass membrane protein</topology>
    </subcellularLocation>
</comment>
<comment type="similarity">
    <text evidence="1">Belongs to the UbiA prenyltransferase family.</text>
</comment>
<gene>
    <name evidence="1" type="primary">ubiA</name>
    <name type="ordered locus">Daro_0413</name>
</gene>
<accession>Q47J11</accession>
<evidence type="ECO:0000255" key="1">
    <source>
        <dbReference type="HAMAP-Rule" id="MF_01635"/>
    </source>
</evidence>
<feature type="chain" id="PRO_0000262791" description="4-hydroxybenzoate octaprenyltransferase">
    <location>
        <begin position="1"/>
        <end position="296"/>
    </location>
</feature>
<feature type="transmembrane region" description="Helical" evidence="1">
    <location>
        <begin position="22"/>
        <end position="42"/>
    </location>
</feature>
<feature type="transmembrane region" description="Helical" evidence="1">
    <location>
        <begin position="46"/>
        <end position="66"/>
    </location>
</feature>
<feature type="transmembrane region" description="Helical" evidence="1">
    <location>
        <begin position="99"/>
        <end position="121"/>
    </location>
</feature>
<feature type="transmembrane region" description="Helical" evidence="1">
    <location>
        <begin position="139"/>
        <end position="159"/>
    </location>
</feature>
<feature type="transmembrane region" description="Helical" evidence="1">
    <location>
        <begin position="163"/>
        <end position="183"/>
    </location>
</feature>
<feature type="transmembrane region" description="Helical" evidence="1">
    <location>
        <begin position="211"/>
        <end position="231"/>
    </location>
</feature>
<feature type="transmembrane region" description="Helical" evidence="1">
    <location>
        <begin position="238"/>
        <end position="258"/>
    </location>
</feature>
<feature type="transmembrane region" description="Helical" evidence="1">
    <location>
        <begin position="270"/>
        <end position="290"/>
    </location>
</feature>
<name>UBIA_DECAR</name>
<proteinExistence type="inferred from homology"/>
<keyword id="KW-0997">Cell inner membrane</keyword>
<keyword id="KW-1003">Cell membrane</keyword>
<keyword id="KW-0460">Magnesium</keyword>
<keyword id="KW-0472">Membrane</keyword>
<keyword id="KW-0808">Transferase</keyword>
<keyword id="KW-0812">Transmembrane</keyword>
<keyword id="KW-1133">Transmembrane helix</keyword>
<keyword id="KW-0831">Ubiquinone biosynthesis</keyword>
<reference key="1">
    <citation type="journal article" date="2009" name="BMC Genomics">
        <title>Metabolic analysis of the soil microbe Dechloromonas aromatica str. RCB: indications of a surprisingly complex life-style and cryptic anaerobic pathways for aromatic degradation.</title>
        <authorList>
            <person name="Salinero K.K."/>
            <person name="Keller K."/>
            <person name="Feil W.S."/>
            <person name="Feil H."/>
            <person name="Trong S."/>
            <person name="Di Bartolo G."/>
            <person name="Lapidus A."/>
        </authorList>
    </citation>
    <scope>NUCLEOTIDE SEQUENCE [LARGE SCALE GENOMIC DNA]</scope>
    <source>
        <strain>RCB</strain>
    </source>
</reference>
<organism>
    <name type="scientific">Dechloromonas aromatica (strain RCB)</name>
    <dbReference type="NCBI Taxonomy" id="159087"/>
    <lineage>
        <taxon>Bacteria</taxon>
        <taxon>Pseudomonadati</taxon>
        <taxon>Pseudomonadota</taxon>
        <taxon>Betaproteobacteria</taxon>
        <taxon>Rhodocyclales</taxon>
        <taxon>Azonexaceae</taxon>
        <taxon>Dechloromonas</taxon>
    </lineage>
</organism>
<protein>
    <recommendedName>
        <fullName evidence="1">4-hydroxybenzoate octaprenyltransferase</fullName>
        <ecNumber evidence="1">2.5.1.39</ecNumber>
    </recommendedName>
    <alternativeName>
        <fullName evidence="1">4-HB polyprenyltransferase</fullName>
    </alternativeName>
</protein>